<keyword id="KW-0002">3D-structure</keyword>
<keyword id="KW-0025">Alternative splicing</keyword>
<keyword id="KW-0040">ANK repeat</keyword>
<keyword id="KW-0966">Cell projection</keyword>
<keyword id="KW-0175">Coiled coil</keyword>
<keyword id="KW-0963">Cytoplasm</keyword>
<keyword id="KW-0379">Hydroxylation</keyword>
<keyword id="KW-0597">Phosphoprotein</keyword>
<keyword id="KW-1267">Proteomics identification</keyword>
<keyword id="KW-1185">Reference proteome</keyword>
<keyword id="KW-0677">Repeat</keyword>
<keyword id="KW-0832">Ubl conjugation</keyword>
<comment type="function">
    <text evidence="2">May be involved in vasopressin signaling in the kidney.</text>
</comment>
<comment type="subunit">
    <text evidence="2 7 8">Homooligomer (PubMed:24998259). Interacts (via SAM domain) with ANKS6 (via SAM domain) (PubMed:24998259). Interacts with BICC1 (By similarity). Interacts with NPHP1 (By similarity). Interacts with NEK8 (By similarity). Interacts with HIF1AN (By similarity). Interacts with NEK7; this interaction alters the subcellular distribution of NEK7 by preventing its nuclear translocation (PubMed:26188091).</text>
</comment>
<comment type="subcellular location">
    <subcellularLocation>
        <location evidence="2">Cell projection</location>
        <location evidence="2">Cilium</location>
    </subcellularLocation>
    <subcellularLocation>
        <location evidence="2">Cytoplasm</location>
    </subcellularLocation>
</comment>
<comment type="alternative products">
    <event type="alternative splicing"/>
    <isoform>
        <id>Q6ZW76-1</id>
        <name>1</name>
        <sequence type="displayed"/>
    </isoform>
    <isoform>
        <id>Q6ZW76-2</id>
        <name>2</name>
        <sequence type="described" ref="VSP_038183"/>
    </isoform>
</comment>
<comment type="domain">
    <text evidence="7">The SAM domain mediates homooligomerization.</text>
</comment>
<comment type="PTM">
    <text evidence="2">Hydroxylated at Asn-96, most probably by HIF1AN.</text>
</comment>
<comment type="PTM">
    <text evidence="2">Phosphorylations at Ser-5, Ser-225, Thr-319, Ser-320, Ser-368 and Ser-371 occur in a NEK7-dependent manner.</text>
</comment>
<comment type="PTM">
    <text evidence="2">Polyubiquitinated.</text>
</comment>
<organism>
    <name type="scientific">Homo sapiens</name>
    <name type="common">Human</name>
    <dbReference type="NCBI Taxonomy" id="9606"/>
    <lineage>
        <taxon>Eukaryota</taxon>
        <taxon>Metazoa</taxon>
        <taxon>Chordata</taxon>
        <taxon>Craniata</taxon>
        <taxon>Vertebrata</taxon>
        <taxon>Euteleostomi</taxon>
        <taxon>Mammalia</taxon>
        <taxon>Eutheria</taxon>
        <taxon>Euarchontoglires</taxon>
        <taxon>Primates</taxon>
        <taxon>Haplorrhini</taxon>
        <taxon>Catarrhini</taxon>
        <taxon>Hominidae</taxon>
        <taxon>Homo</taxon>
    </lineage>
</organism>
<feature type="chain" id="PRO_0000230777" description="Ankyrin repeat and SAM domain-containing protein 3">
    <location>
        <begin position="1"/>
        <end position="656"/>
    </location>
</feature>
<feature type="repeat" description="ANK 1">
    <location>
        <begin position="34"/>
        <end position="64"/>
    </location>
</feature>
<feature type="repeat" description="ANK 2">
    <location>
        <begin position="68"/>
        <end position="97"/>
    </location>
</feature>
<feature type="repeat" description="ANK 3">
    <location>
        <begin position="101"/>
        <end position="130"/>
    </location>
</feature>
<feature type="repeat" description="ANK 4">
    <location>
        <begin position="134"/>
        <end position="163"/>
    </location>
</feature>
<feature type="repeat" description="ANK 5">
    <location>
        <begin position="168"/>
        <end position="197"/>
    </location>
</feature>
<feature type="repeat" description="ANK 6">
    <location>
        <begin position="201"/>
        <end position="220"/>
    </location>
</feature>
<feature type="domain" description="SAM" evidence="4">
    <location>
        <begin position="425"/>
        <end position="488"/>
    </location>
</feature>
<feature type="region of interest" description="Interaction with NEK7" evidence="2">
    <location>
        <begin position="1"/>
        <end position="422"/>
    </location>
</feature>
<feature type="region of interest" description="Disordered" evidence="5">
    <location>
        <begin position="235"/>
        <end position="265"/>
    </location>
</feature>
<feature type="region of interest" description="Disordered" evidence="5">
    <location>
        <begin position="277"/>
        <end position="312"/>
    </location>
</feature>
<feature type="region of interest" description="Disordered" evidence="5">
    <location>
        <begin position="346"/>
        <end position="425"/>
    </location>
</feature>
<feature type="coiled-coil region" evidence="3">
    <location>
        <begin position="501"/>
        <end position="526"/>
    </location>
</feature>
<feature type="modified residue" description="Phosphoserine" evidence="1">
    <location>
        <position position="2"/>
    </location>
</feature>
<feature type="modified residue" description="Phosphoserine" evidence="1">
    <location>
        <position position="5"/>
    </location>
</feature>
<feature type="modified residue" description="3-hydroxyasparagine" evidence="2">
    <location>
        <position position="96"/>
    </location>
</feature>
<feature type="modified residue" description="Phosphoserine" evidence="2">
    <location>
        <position position="201"/>
    </location>
</feature>
<feature type="modified residue" description="Phosphoserine" evidence="2">
    <location>
        <position position="225"/>
    </location>
</feature>
<feature type="modified residue" description="Phosphoserine" evidence="2">
    <location>
        <position position="243"/>
    </location>
</feature>
<feature type="modified residue" description="Phosphoserine" evidence="2">
    <location>
        <position position="244"/>
    </location>
</feature>
<feature type="modified residue" description="Phosphoserine" evidence="2">
    <location>
        <position position="245"/>
    </location>
</feature>
<feature type="modified residue" description="Phosphothreonine" evidence="2">
    <location>
        <position position="319"/>
    </location>
</feature>
<feature type="modified residue" description="Phosphoserine" evidence="2">
    <location>
        <position position="320"/>
    </location>
</feature>
<feature type="modified residue" description="Phosphoserine" evidence="2">
    <location>
        <position position="368"/>
    </location>
</feature>
<feature type="modified residue" description="Phosphoserine" evidence="2">
    <location>
        <position position="371"/>
    </location>
</feature>
<feature type="modified residue" description="Phosphoserine" evidence="2">
    <location>
        <position position="375"/>
    </location>
</feature>
<feature type="modified residue" description="Phosphoserine" evidence="2">
    <location>
        <position position="541"/>
    </location>
</feature>
<feature type="splice variant" id="VSP_038183" description="In isoform 2." evidence="9">
    <location>
        <begin position="1"/>
        <end position="73"/>
    </location>
</feature>
<feature type="sequence variant" id="VAR_048283" description="In dbSNP:rs863980." evidence="6">
    <original>A</original>
    <variation>T</variation>
    <location>
        <position position="404"/>
    </location>
</feature>
<feature type="sequence variant" id="VAR_048284" description="In dbSNP:rs9936675.">
    <original>A</original>
    <variation>T</variation>
    <location>
        <position position="593"/>
    </location>
</feature>
<feature type="mutagenesis site" description="Decreased homooligomerization. No effect on interaction with ANKS6." evidence="7">
    <original>D</original>
    <variation>K</variation>
    <location>
        <position position="450"/>
    </location>
</feature>
<feature type="mutagenesis site" description="Decreased homooligomerization. No effect on interaction with ANKS6." evidence="7">
    <original>I</original>
    <variation>E</variation>
    <location>
        <position position="455"/>
    </location>
</feature>
<feature type="mutagenesis site" description="Decreased homooligomerization. No effect on interaction with ANKS6." evidence="7">
    <original>E</original>
    <variation>K</variation>
    <location>
        <position position="466"/>
    </location>
</feature>
<feature type="mutagenesis site" description="Decreased homooligomerization. Decreased interaction with ANKS6." evidence="7">
    <original>L</original>
    <variation>E</variation>
    <location>
        <position position="471"/>
    </location>
</feature>
<feature type="mutagenesis site" description="Decreased homooligomerization. Decreased interaction with ANKS6." evidence="7">
    <original>F</original>
    <variation>E</variation>
    <location>
        <position position="472"/>
    </location>
</feature>
<feature type="mutagenesis site" description="Decreased homooligomerization. Decreased interaction with ANKS6." evidence="7">
    <original>K</original>
    <variation>E</variation>
    <location>
        <position position="477"/>
    </location>
</feature>
<feature type="sequence conflict" description="In Ref. 3; BAB85563." evidence="10" ref="3">
    <original>VKECVQ</original>
    <variation>HILRLF</variation>
    <location>
        <begin position="51"/>
        <end position="56"/>
    </location>
</feature>
<feature type="sequence conflict" description="In Ref. 1; BAG63156." evidence="10" ref="1">
    <original>F</original>
    <variation>S</variation>
    <location>
        <position position="472"/>
    </location>
</feature>
<feature type="helix" evidence="11">
    <location>
        <begin position="430"/>
        <end position="436"/>
    </location>
</feature>
<feature type="helix" evidence="11">
    <location>
        <begin position="440"/>
        <end position="442"/>
    </location>
</feature>
<feature type="helix" evidence="11">
    <location>
        <begin position="443"/>
        <end position="448"/>
    </location>
</feature>
<feature type="helix" evidence="11">
    <location>
        <begin position="453"/>
        <end position="456"/>
    </location>
</feature>
<feature type="helix" evidence="11">
    <location>
        <begin position="461"/>
        <end position="467"/>
    </location>
</feature>
<feature type="helix" evidence="11">
    <location>
        <begin position="472"/>
        <end position="484"/>
    </location>
</feature>
<name>ANKS3_HUMAN</name>
<protein>
    <recommendedName>
        <fullName>Ankyrin repeat and SAM domain-containing protein 3</fullName>
    </recommendedName>
</protein>
<dbReference type="EMBL" id="AK123496">
    <property type="protein sequence ID" value="BAC85629.1"/>
    <property type="molecule type" value="mRNA"/>
</dbReference>
<dbReference type="EMBL" id="AK301683">
    <property type="protein sequence ID" value="BAG63156.1"/>
    <property type="molecule type" value="mRNA"/>
</dbReference>
<dbReference type="EMBL" id="CH471112">
    <property type="protein sequence ID" value="EAW85271.1"/>
    <property type="molecule type" value="Genomic_DNA"/>
</dbReference>
<dbReference type="EMBL" id="CH471112">
    <property type="protein sequence ID" value="EAW85272.1"/>
    <property type="molecule type" value="Genomic_DNA"/>
</dbReference>
<dbReference type="EMBL" id="CH471112">
    <property type="protein sequence ID" value="EAW85273.1"/>
    <property type="molecule type" value="Genomic_DNA"/>
</dbReference>
<dbReference type="EMBL" id="AB075857">
    <property type="protein sequence ID" value="BAB85563.1"/>
    <property type="molecule type" value="mRNA"/>
</dbReference>
<dbReference type="CCDS" id="CCDS10520.1">
    <molecule id="Q6ZW76-1"/>
</dbReference>
<dbReference type="RefSeq" id="NP_001229858.1">
    <property type="nucleotide sequence ID" value="NM_001242929.1"/>
</dbReference>
<dbReference type="RefSeq" id="NP_001295018.1">
    <property type="nucleotide sequence ID" value="NM_001308089.1"/>
</dbReference>
<dbReference type="RefSeq" id="NP_597707.1">
    <molecule id="Q6ZW76-1"/>
    <property type="nucleotide sequence ID" value="NM_133450.4"/>
</dbReference>
<dbReference type="RefSeq" id="XP_005255176.1">
    <property type="nucleotide sequence ID" value="XM_005255119.3"/>
</dbReference>
<dbReference type="RefSeq" id="XP_011520675.1">
    <molecule id="Q6ZW76-1"/>
    <property type="nucleotide sequence ID" value="XM_011522373.2"/>
</dbReference>
<dbReference type="RefSeq" id="XP_054235575.1">
    <molecule id="Q6ZW76-1"/>
    <property type="nucleotide sequence ID" value="XM_054379600.1"/>
</dbReference>
<dbReference type="PDB" id="4NJ8">
    <property type="method" value="X-ray"/>
    <property type="resolution" value="1.60 A"/>
    <property type="chains" value="A/B=421-490"/>
</dbReference>
<dbReference type="PDB" id="4NL9">
    <property type="method" value="X-ray"/>
    <property type="resolution" value="1.50 A"/>
    <property type="chains" value="A/B=421-490"/>
</dbReference>
<dbReference type="PDBsum" id="4NJ8"/>
<dbReference type="PDBsum" id="4NL9"/>
<dbReference type="SMR" id="Q6ZW76"/>
<dbReference type="BioGRID" id="125861">
    <property type="interactions" value="41"/>
</dbReference>
<dbReference type="FunCoup" id="Q6ZW76">
    <property type="interactions" value="797"/>
</dbReference>
<dbReference type="IntAct" id="Q6ZW76">
    <property type="interactions" value="34"/>
</dbReference>
<dbReference type="MINT" id="Q6ZW76"/>
<dbReference type="STRING" id="9606.ENSP00000304586"/>
<dbReference type="GlyGen" id="Q6ZW76">
    <property type="glycosylation" value="1 site, 1 O-linked glycan (1 site)"/>
</dbReference>
<dbReference type="iPTMnet" id="Q6ZW76"/>
<dbReference type="PhosphoSitePlus" id="Q6ZW76"/>
<dbReference type="BioMuta" id="ANKS3"/>
<dbReference type="DMDM" id="74749704"/>
<dbReference type="jPOST" id="Q6ZW76"/>
<dbReference type="MassIVE" id="Q6ZW76"/>
<dbReference type="PaxDb" id="9606-ENSP00000304586"/>
<dbReference type="PeptideAtlas" id="Q6ZW76"/>
<dbReference type="ProteomicsDB" id="68467">
    <molecule id="Q6ZW76-1"/>
</dbReference>
<dbReference type="ProteomicsDB" id="68468">
    <molecule id="Q6ZW76-2"/>
</dbReference>
<dbReference type="Antibodypedia" id="24396">
    <property type="antibodies" value="91 antibodies from 20 providers"/>
</dbReference>
<dbReference type="DNASU" id="124401"/>
<dbReference type="Ensembl" id="ENST00000304283.9">
    <molecule id="Q6ZW76-1"/>
    <property type="protein sequence ID" value="ENSP00000304586.4"/>
    <property type="gene ID" value="ENSG00000168096.15"/>
</dbReference>
<dbReference type="Ensembl" id="ENST00000585773.5">
    <molecule id="Q6ZW76-2"/>
    <property type="protein sequence ID" value="ENSP00000465294.1"/>
    <property type="gene ID" value="ENSG00000168096.15"/>
</dbReference>
<dbReference type="Ensembl" id="ENST00000614075.4">
    <molecule id="Q6ZW76-1"/>
    <property type="protein sequence ID" value="ENSP00000480350.1"/>
    <property type="gene ID" value="ENSG00000168096.15"/>
</dbReference>
<dbReference type="GeneID" id="124401"/>
<dbReference type="KEGG" id="hsa:124401"/>
<dbReference type="MANE-Select" id="ENST00000304283.9">
    <property type="protein sequence ID" value="ENSP00000304586.4"/>
    <property type="RefSeq nucleotide sequence ID" value="NM_133450.4"/>
    <property type="RefSeq protein sequence ID" value="NP_597707.1"/>
</dbReference>
<dbReference type="UCSC" id="uc002cxj.3">
    <molecule id="Q6ZW76-1"/>
    <property type="organism name" value="human"/>
</dbReference>
<dbReference type="AGR" id="HGNC:29422"/>
<dbReference type="CTD" id="124401"/>
<dbReference type="DisGeNET" id="124401"/>
<dbReference type="GeneCards" id="ANKS3"/>
<dbReference type="HGNC" id="HGNC:29422">
    <property type="gene designation" value="ANKS3"/>
</dbReference>
<dbReference type="HPA" id="ENSG00000168096">
    <property type="expression patterns" value="Low tissue specificity"/>
</dbReference>
<dbReference type="MalaCards" id="ANKS3"/>
<dbReference type="neXtProt" id="NX_Q6ZW76"/>
<dbReference type="OpenTargets" id="ENSG00000168096"/>
<dbReference type="Orphanet" id="101063">
    <property type="disease" value="Situs inversus totalis"/>
</dbReference>
<dbReference type="PharmGKB" id="PA143485303"/>
<dbReference type="VEuPathDB" id="HostDB:ENSG00000168096"/>
<dbReference type="eggNOG" id="KOG0504">
    <property type="taxonomic scope" value="Eukaryota"/>
</dbReference>
<dbReference type="GeneTree" id="ENSGT00940000156610"/>
<dbReference type="HOGENOM" id="CLU_014543_0_0_1"/>
<dbReference type="InParanoid" id="Q6ZW76"/>
<dbReference type="OMA" id="RKDVHTQ"/>
<dbReference type="OrthoDB" id="539213at2759"/>
<dbReference type="PAN-GO" id="Q6ZW76">
    <property type="GO annotations" value="1 GO annotation based on evolutionary models"/>
</dbReference>
<dbReference type="PhylomeDB" id="Q6ZW76"/>
<dbReference type="TreeFam" id="TF331487"/>
<dbReference type="PathwayCommons" id="Q6ZW76"/>
<dbReference type="SignaLink" id="Q6ZW76"/>
<dbReference type="BioGRID-ORCS" id="124401">
    <property type="hits" value="13 hits in 1157 CRISPR screens"/>
</dbReference>
<dbReference type="EvolutionaryTrace" id="Q6ZW76"/>
<dbReference type="GenomeRNAi" id="124401"/>
<dbReference type="Pharos" id="Q6ZW76">
    <property type="development level" value="Tbio"/>
</dbReference>
<dbReference type="PRO" id="PR:Q6ZW76"/>
<dbReference type="Proteomes" id="UP000005640">
    <property type="component" value="Chromosome 16"/>
</dbReference>
<dbReference type="RNAct" id="Q6ZW76">
    <property type="molecule type" value="protein"/>
</dbReference>
<dbReference type="Bgee" id="ENSG00000168096">
    <property type="expression patterns" value="Expressed in cerebellar hemisphere and 132 other cell types or tissues"/>
</dbReference>
<dbReference type="ExpressionAtlas" id="Q6ZW76">
    <property type="expression patterns" value="baseline and differential"/>
</dbReference>
<dbReference type="GO" id="GO:0005929">
    <property type="term" value="C:cilium"/>
    <property type="evidence" value="ECO:0000318"/>
    <property type="project" value="GO_Central"/>
</dbReference>
<dbReference type="GO" id="GO:0005737">
    <property type="term" value="C:cytoplasm"/>
    <property type="evidence" value="ECO:0000250"/>
    <property type="project" value="UniProtKB"/>
</dbReference>
<dbReference type="CDD" id="cd09519">
    <property type="entry name" value="SAM_ANKS3"/>
    <property type="match status" value="1"/>
</dbReference>
<dbReference type="Gene3D" id="1.25.40.20">
    <property type="entry name" value="Ankyrin repeat-containing domain"/>
    <property type="match status" value="1"/>
</dbReference>
<dbReference type="Gene3D" id="1.10.150.50">
    <property type="entry name" value="Transcription Factor, Ets-1"/>
    <property type="match status" value="1"/>
</dbReference>
<dbReference type="InterPro" id="IPR047238">
    <property type="entry name" value="ANKS3_SAM"/>
</dbReference>
<dbReference type="InterPro" id="IPR002110">
    <property type="entry name" value="Ankyrin_rpt"/>
</dbReference>
<dbReference type="InterPro" id="IPR036770">
    <property type="entry name" value="Ankyrin_rpt-contain_sf"/>
</dbReference>
<dbReference type="InterPro" id="IPR001660">
    <property type="entry name" value="SAM"/>
</dbReference>
<dbReference type="InterPro" id="IPR013761">
    <property type="entry name" value="SAM/pointed_sf"/>
</dbReference>
<dbReference type="PANTHER" id="PTHR24184:SF6">
    <property type="entry name" value="ANKYRIN REPEAT AND SAM DOMAIN-CONTAINING PROTEIN 3"/>
    <property type="match status" value="1"/>
</dbReference>
<dbReference type="PANTHER" id="PTHR24184">
    <property type="entry name" value="SI:CH211-189E2.2"/>
    <property type="match status" value="1"/>
</dbReference>
<dbReference type="Pfam" id="PF12796">
    <property type="entry name" value="Ank_2"/>
    <property type="match status" value="1"/>
</dbReference>
<dbReference type="Pfam" id="PF13637">
    <property type="entry name" value="Ank_4"/>
    <property type="match status" value="1"/>
</dbReference>
<dbReference type="Pfam" id="PF00536">
    <property type="entry name" value="SAM_1"/>
    <property type="match status" value="1"/>
</dbReference>
<dbReference type="PRINTS" id="PR01415">
    <property type="entry name" value="ANKYRIN"/>
</dbReference>
<dbReference type="SMART" id="SM00248">
    <property type="entry name" value="ANK"/>
    <property type="match status" value="6"/>
</dbReference>
<dbReference type="SMART" id="SM00454">
    <property type="entry name" value="SAM"/>
    <property type="match status" value="1"/>
</dbReference>
<dbReference type="SUPFAM" id="SSF48403">
    <property type="entry name" value="Ankyrin repeat"/>
    <property type="match status" value="1"/>
</dbReference>
<dbReference type="SUPFAM" id="SSF47769">
    <property type="entry name" value="SAM/Pointed domain"/>
    <property type="match status" value="1"/>
</dbReference>
<dbReference type="PROSITE" id="PS50297">
    <property type="entry name" value="ANK_REP_REGION"/>
    <property type="match status" value="1"/>
</dbReference>
<dbReference type="PROSITE" id="PS50088">
    <property type="entry name" value="ANK_REPEAT"/>
    <property type="match status" value="4"/>
</dbReference>
<dbReference type="PROSITE" id="PS50105">
    <property type="entry name" value="SAM_DOMAIN"/>
    <property type="match status" value="1"/>
</dbReference>
<evidence type="ECO:0000250" key="1">
    <source>
        <dbReference type="UniProtKB" id="Q5M9H0"/>
    </source>
</evidence>
<evidence type="ECO:0000250" key="2">
    <source>
        <dbReference type="UniProtKB" id="Q9CZK6"/>
    </source>
</evidence>
<evidence type="ECO:0000255" key="3"/>
<evidence type="ECO:0000255" key="4">
    <source>
        <dbReference type="PROSITE-ProRule" id="PRU00184"/>
    </source>
</evidence>
<evidence type="ECO:0000256" key="5">
    <source>
        <dbReference type="SAM" id="MobiDB-lite"/>
    </source>
</evidence>
<evidence type="ECO:0000269" key="6">
    <source>
    </source>
</evidence>
<evidence type="ECO:0000269" key="7">
    <source>
    </source>
</evidence>
<evidence type="ECO:0000269" key="8">
    <source>
    </source>
</evidence>
<evidence type="ECO:0000303" key="9">
    <source>
    </source>
</evidence>
<evidence type="ECO:0000305" key="10"/>
<evidence type="ECO:0007829" key="11">
    <source>
        <dbReference type="PDB" id="4NL9"/>
    </source>
</evidence>
<proteinExistence type="evidence at protein level"/>
<gene>
    <name type="primary">ANKS3</name>
    <name type="synonym">KIAA1977</name>
</gene>
<sequence>MSELSDEASEPELLNRSLSMWHGLGTQVSGEELDVPLDLHTAASIGQYEVVKECVQRRELDLNKKNGGGWTPLMYASYIGHDTIVHLLLEAGVSVNVPTPEGQTPLMLASSCGNESIAYFLLQQGAELEMKDIQGWTALFHCTSAGHQHMVRFLLDSGANANVREPICGFTPLMEAAAAGHEIIVQYFLNHGVKVDARDHSGATARMLAKQYGHMKIVALMDTYSPSLPKSLYRSPEKYEDLSSSDESCPAPQRQRPCRKKGVSIHEGPRALARITGIGLGGRAPRPRYEQAPPRGYVTFNSSGENPLEEEGLCCRDVTSPINERDVESSSSSSSREEHAFCANLGPVQSSSSSEGLARAQGLSSEASVESNEDSDHACKSSARKQAKSYMKTKNPDSQWPPRAATDREGFLAESSPQTQRAPYSGPQDLAALLEQIGCLKYLQVFEEQDVDLRIFLTLTESDLKEIGITLFGPKRKMTSAIARWHSSARPPGDALELAYADRLEAEMQELAIQLHKRCEEVEATRGQVCQEQELRAVVESCLLEQDRAREDLQARLRETWALARDAALVLDQLRACQAELSSRVRQDQPPGAATLGLAVPPADSKGWQASLQAMSLPELSGALEDRVREMGQALCLVTQSLEKLQVLNGKKWRET</sequence>
<accession>Q6ZW76</accession>
<accession>B4DWU4</accession>
<accession>D3DUE2</accession>
<accession>Q8TF25</accession>
<reference key="1">
    <citation type="journal article" date="2004" name="Nat. Genet.">
        <title>Complete sequencing and characterization of 21,243 full-length human cDNAs.</title>
        <authorList>
            <person name="Ota T."/>
            <person name="Suzuki Y."/>
            <person name="Nishikawa T."/>
            <person name="Otsuki T."/>
            <person name="Sugiyama T."/>
            <person name="Irie R."/>
            <person name="Wakamatsu A."/>
            <person name="Hayashi K."/>
            <person name="Sato H."/>
            <person name="Nagai K."/>
            <person name="Kimura K."/>
            <person name="Makita H."/>
            <person name="Sekine M."/>
            <person name="Obayashi M."/>
            <person name="Nishi T."/>
            <person name="Shibahara T."/>
            <person name="Tanaka T."/>
            <person name="Ishii S."/>
            <person name="Yamamoto J."/>
            <person name="Saito K."/>
            <person name="Kawai Y."/>
            <person name="Isono Y."/>
            <person name="Nakamura Y."/>
            <person name="Nagahari K."/>
            <person name="Murakami K."/>
            <person name="Yasuda T."/>
            <person name="Iwayanagi T."/>
            <person name="Wagatsuma M."/>
            <person name="Shiratori A."/>
            <person name="Sudo H."/>
            <person name="Hosoiri T."/>
            <person name="Kaku Y."/>
            <person name="Kodaira H."/>
            <person name="Kondo H."/>
            <person name="Sugawara M."/>
            <person name="Takahashi M."/>
            <person name="Kanda K."/>
            <person name="Yokoi T."/>
            <person name="Furuya T."/>
            <person name="Kikkawa E."/>
            <person name="Omura Y."/>
            <person name="Abe K."/>
            <person name="Kamihara K."/>
            <person name="Katsuta N."/>
            <person name="Sato K."/>
            <person name="Tanikawa M."/>
            <person name="Yamazaki M."/>
            <person name="Ninomiya K."/>
            <person name="Ishibashi T."/>
            <person name="Yamashita H."/>
            <person name="Murakawa K."/>
            <person name="Fujimori K."/>
            <person name="Tanai H."/>
            <person name="Kimata M."/>
            <person name="Watanabe M."/>
            <person name="Hiraoka S."/>
            <person name="Chiba Y."/>
            <person name="Ishida S."/>
            <person name="Ono Y."/>
            <person name="Takiguchi S."/>
            <person name="Watanabe S."/>
            <person name="Yosida M."/>
            <person name="Hotuta T."/>
            <person name="Kusano J."/>
            <person name="Kanehori K."/>
            <person name="Takahashi-Fujii A."/>
            <person name="Hara H."/>
            <person name="Tanase T.-O."/>
            <person name="Nomura Y."/>
            <person name="Togiya S."/>
            <person name="Komai F."/>
            <person name="Hara R."/>
            <person name="Takeuchi K."/>
            <person name="Arita M."/>
            <person name="Imose N."/>
            <person name="Musashino K."/>
            <person name="Yuuki H."/>
            <person name="Oshima A."/>
            <person name="Sasaki N."/>
            <person name="Aotsuka S."/>
            <person name="Yoshikawa Y."/>
            <person name="Matsunawa H."/>
            <person name="Ichihara T."/>
            <person name="Shiohata N."/>
            <person name="Sano S."/>
            <person name="Moriya S."/>
            <person name="Momiyama H."/>
            <person name="Satoh N."/>
            <person name="Takami S."/>
            <person name="Terashima Y."/>
            <person name="Suzuki O."/>
            <person name="Nakagawa S."/>
            <person name="Senoh A."/>
            <person name="Mizoguchi H."/>
            <person name="Goto Y."/>
            <person name="Shimizu F."/>
            <person name="Wakebe H."/>
            <person name="Hishigaki H."/>
            <person name="Watanabe T."/>
            <person name="Sugiyama A."/>
            <person name="Takemoto M."/>
            <person name="Kawakami B."/>
            <person name="Yamazaki M."/>
            <person name="Watanabe K."/>
            <person name="Kumagai A."/>
            <person name="Itakura S."/>
            <person name="Fukuzumi Y."/>
            <person name="Fujimori Y."/>
            <person name="Komiyama M."/>
            <person name="Tashiro H."/>
            <person name="Tanigami A."/>
            <person name="Fujiwara T."/>
            <person name="Ono T."/>
            <person name="Yamada K."/>
            <person name="Fujii Y."/>
            <person name="Ozaki K."/>
            <person name="Hirao M."/>
            <person name="Ohmori Y."/>
            <person name="Kawabata A."/>
            <person name="Hikiji T."/>
            <person name="Kobatake N."/>
            <person name="Inagaki H."/>
            <person name="Ikema Y."/>
            <person name="Okamoto S."/>
            <person name="Okitani R."/>
            <person name="Kawakami T."/>
            <person name="Noguchi S."/>
            <person name="Itoh T."/>
            <person name="Shigeta K."/>
            <person name="Senba T."/>
            <person name="Matsumura K."/>
            <person name="Nakajima Y."/>
            <person name="Mizuno T."/>
            <person name="Morinaga M."/>
            <person name="Sasaki M."/>
            <person name="Togashi T."/>
            <person name="Oyama M."/>
            <person name="Hata H."/>
            <person name="Watanabe M."/>
            <person name="Komatsu T."/>
            <person name="Mizushima-Sugano J."/>
            <person name="Satoh T."/>
            <person name="Shirai Y."/>
            <person name="Takahashi Y."/>
            <person name="Nakagawa K."/>
            <person name="Okumura K."/>
            <person name="Nagase T."/>
            <person name="Nomura N."/>
            <person name="Kikuchi H."/>
            <person name="Masuho Y."/>
            <person name="Yamashita R."/>
            <person name="Nakai K."/>
            <person name="Yada T."/>
            <person name="Nakamura Y."/>
            <person name="Ohara O."/>
            <person name="Isogai T."/>
            <person name="Sugano S."/>
        </authorList>
    </citation>
    <scope>NUCLEOTIDE SEQUENCE [LARGE SCALE MRNA] (ISOFORMS 1 AND 2)</scope>
    <scope>VARIANT THR-404</scope>
    <source>
        <tissue>Esophagus</tissue>
        <tissue>Thalamus</tissue>
    </source>
</reference>
<reference key="2">
    <citation type="submission" date="2005-09" db="EMBL/GenBank/DDBJ databases">
        <authorList>
            <person name="Mural R.J."/>
            <person name="Istrail S."/>
            <person name="Sutton G.G."/>
            <person name="Florea L."/>
            <person name="Halpern A.L."/>
            <person name="Mobarry C.M."/>
            <person name="Lippert R."/>
            <person name="Walenz B."/>
            <person name="Shatkay H."/>
            <person name="Dew I."/>
            <person name="Miller J.R."/>
            <person name="Flanigan M.J."/>
            <person name="Edwards N.J."/>
            <person name="Bolanos R."/>
            <person name="Fasulo D."/>
            <person name="Halldorsson B.V."/>
            <person name="Hannenhalli S."/>
            <person name="Turner R."/>
            <person name="Yooseph S."/>
            <person name="Lu F."/>
            <person name="Nusskern D.R."/>
            <person name="Shue B.C."/>
            <person name="Zheng X.H."/>
            <person name="Zhong F."/>
            <person name="Delcher A.L."/>
            <person name="Huson D.H."/>
            <person name="Kravitz S.A."/>
            <person name="Mouchard L."/>
            <person name="Reinert K."/>
            <person name="Remington K.A."/>
            <person name="Clark A.G."/>
            <person name="Waterman M.S."/>
            <person name="Eichler E.E."/>
            <person name="Adams M.D."/>
            <person name="Hunkapiller M.W."/>
            <person name="Myers E.W."/>
            <person name="Venter J.C."/>
        </authorList>
    </citation>
    <scope>NUCLEOTIDE SEQUENCE [LARGE SCALE GENOMIC DNA]</scope>
</reference>
<reference key="3">
    <citation type="journal article" date="2001" name="DNA Res.">
        <title>Prediction of the coding sequences of unidentified human genes. XXII. The complete sequences of 50 new cDNA clones which code for large proteins.</title>
        <authorList>
            <person name="Nagase T."/>
            <person name="Kikuno R."/>
            <person name="Ohara O."/>
        </authorList>
    </citation>
    <scope>NUCLEOTIDE SEQUENCE [LARGE SCALE MRNA] OF 51-656</scope>
    <source>
        <tissue>Brain</tissue>
    </source>
</reference>
<reference key="4">
    <citation type="journal article" date="2015" name="Biochem. Biophys. Res. Commun.">
        <title>Anks3 alters the sub-cellular localization of the Nek7 kinase.</title>
        <authorList>
            <person name="Ramachandran H."/>
            <person name="Engel C."/>
            <person name="Mueller B."/>
            <person name="Dengjel J."/>
            <person name="Walz G."/>
            <person name="Yakulov T.A."/>
        </authorList>
    </citation>
    <scope>INTERACTION WITH NEK7</scope>
</reference>
<reference key="5">
    <citation type="journal article" date="2014" name="BMC Struct. Biol.">
        <title>Characterization of the SAM domain of the PKD-related protein ANKS6 and its interaction with ANKS3.</title>
        <authorList>
            <person name="Leettola C.N."/>
            <person name="Knight M.J."/>
            <person name="Cascio D."/>
            <person name="Hoffman S."/>
            <person name="Bowie J.U."/>
        </authorList>
    </citation>
    <scope>X-RAY CRYSTALLOGRAPHY (1.60 ANGSTROMS) OF 421-490 OF MUTANT ALA-471 HOMODIMER</scope>
    <scope>X-RAY CRYSTALLOGRAPHY (1.50 ANGSTROMS) OF 421-490 OF MUTANT GLU-455 IN COMPLEX WITH ANKS6</scope>
    <scope>DOMAIN</scope>
    <scope>SUBUNIT</scope>
    <scope>INTERACTION WITH ANKS6</scope>
    <scope>MUTAGENESIS OF ASP-450; ILE-455; GLU-466; LEU-471; PHE-472 AND LYS-477</scope>
</reference>